<evidence type="ECO:0000255" key="1">
    <source>
        <dbReference type="HAMAP-Rule" id="MF_00679"/>
    </source>
</evidence>
<feature type="chain" id="PRO_1000044858" description="Chaperone protein HscA homolog">
    <location>
        <begin position="1"/>
        <end position="619"/>
    </location>
</feature>
<protein>
    <recommendedName>
        <fullName evidence="1">Chaperone protein HscA homolog</fullName>
    </recommendedName>
</protein>
<sequence>MALLQIAEPGQAAAPHQHRLAVGIDLGTTNSLVASVRSGQSVILNDEQERSLVPSVVHYGVEEKKVGLEAFEQASLDPKNTVISVKRLIGRSLPDVQSRYSSLPYEFVASENGLPLIITAQGPKSPIEVSSDILSRLNHIAEQRLGGELSGVVITVPAYFDDAQRQSTKDAARLAGLNVLRLLNEPTAAALAYGLDSGQEGIIAVYDLGGGTFDISILRLSKGIFEVLATGGDTALGGDDFDHLIADWVIEQTKLKPQTANQQRELITLANQAKITLTNEKSAVISWQDFSVEISREQFNELIYPLVKRSLLTCRRALKDANVESEEVQAVVMVGGSTRVPYVREQVGEFFGKTPLTSIDPDKVVALGAAIQADILVGNKTDSDMLLLDVVPLSLGIETMGGLVEKIIPRNTTIPVARAQEFTTFKDGQTAMSVHVLQGERELVDDCRSLGRFTLRGIPPMAAGAAHIRVTYQVDADGLLSVTAMEKSTKVQASIQIKPSYGLTDEEVTAMIKSSFDNAQEDLQARELAEQRVEADRVIESVIVALQADGAELLSTDEFHHIETVLKQLMDVKQGSDRDAIAQGIKALDTATQEFAARRMNASINKALTGKNLSDIENP</sequence>
<comment type="function">
    <text evidence="1">Chaperone involved in the maturation of iron-sulfur cluster-containing proteins. Has a low intrinsic ATPase activity which is markedly stimulated by HscB.</text>
</comment>
<comment type="similarity">
    <text evidence="1">Belongs to the heat shock protein 70 family.</text>
</comment>
<dbReference type="EMBL" id="CP000057">
    <property type="protein sequence ID" value="AAX87428.1"/>
    <property type="molecule type" value="Genomic_DNA"/>
</dbReference>
<dbReference type="RefSeq" id="WP_011272011.1">
    <property type="nucleotide sequence ID" value="NC_007146.2"/>
</dbReference>
<dbReference type="SMR" id="Q4QNG9"/>
<dbReference type="GeneID" id="93219319"/>
<dbReference type="KEGG" id="hit:NTHI0493"/>
<dbReference type="HOGENOM" id="CLU_005965_2_1_6"/>
<dbReference type="Proteomes" id="UP000002525">
    <property type="component" value="Chromosome"/>
</dbReference>
<dbReference type="GO" id="GO:0005524">
    <property type="term" value="F:ATP binding"/>
    <property type="evidence" value="ECO:0007669"/>
    <property type="project" value="UniProtKB-KW"/>
</dbReference>
<dbReference type="GO" id="GO:0016887">
    <property type="term" value="F:ATP hydrolysis activity"/>
    <property type="evidence" value="ECO:0007669"/>
    <property type="project" value="UniProtKB-UniRule"/>
</dbReference>
<dbReference type="GO" id="GO:0140662">
    <property type="term" value="F:ATP-dependent protein folding chaperone"/>
    <property type="evidence" value="ECO:0007669"/>
    <property type="project" value="InterPro"/>
</dbReference>
<dbReference type="GO" id="GO:0051082">
    <property type="term" value="F:unfolded protein binding"/>
    <property type="evidence" value="ECO:0007669"/>
    <property type="project" value="InterPro"/>
</dbReference>
<dbReference type="GO" id="GO:0016226">
    <property type="term" value="P:iron-sulfur cluster assembly"/>
    <property type="evidence" value="ECO:0007669"/>
    <property type="project" value="InterPro"/>
</dbReference>
<dbReference type="CDD" id="cd10236">
    <property type="entry name" value="ASKHA_NBD_HSP70_HscA"/>
    <property type="match status" value="1"/>
</dbReference>
<dbReference type="FunFam" id="3.30.420.40:FF:000046">
    <property type="entry name" value="Chaperone protein HscA"/>
    <property type="match status" value="1"/>
</dbReference>
<dbReference type="FunFam" id="2.60.34.10:FF:000005">
    <property type="entry name" value="Chaperone protein HscA homolog"/>
    <property type="match status" value="1"/>
</dbReference>
<dbReference type="FunFam" id="3.30.420.40:FF:000020">
    <property type="entry name" value="Chaperone protein HscA homolog"/>
    <property type="match status" value="1"/>
</dbReference>
<dbReference type="Gene3D" id="1.20.1270.10">
    <property type="match status" value="1"/>
</dbReference>
<dbReference type="Gene3D" id="3.30.420.40">
    <property type="match status" value="2"/>
</dbReference>
<dbReference type="Gene3D" id="3.90.640.10">
    <property type="entry name" value="Actin, Chain A, domain 4"/>
    <property type="match status" value="1"/>
</dbReference>
<dbReference type="Gene3D" id="2.60.34.10">
    <property type="entry name" value="Substrate Binding Domain Of DNAk, Chain A, domain 1"/>
    <property type="match status" value="1"/>
</dbReference>
<dbReference type="HAMAP" id="MF_00679">
    <property type="entry name" value="HscA"/>
    <property type="match status" value="1"/>
</dbReference>
<dbReference type="InterPro" id="IPR043129">
    <property type="entry name" value="ATPase_NBD"/>
</dbReference>
<dbReference type="InterPro" id="IPR018181">
    <property type="entry name" value="Heat_shock_70_CS"/>
</dbReference>
<dbReference type="InterPro" id="IPR042039">
    <property type="entry name" value="HscA_NBD"/>
</dbReference>
<dbReference type="InterPro" id="IPR029048">
    <property type="entry name" value="HSP70_C_sf"/>
</dbReference>
<dbReference type="InterPro" id="IPR029047">
    <property type="entry name" value="HSP70_peptide-bd_sf"/>
</dbReference>
<dbReference type="InterPro" id="IPR013126">
    <property type="entry name" value="Hsp_70_fam"/>
</dbReference>
<dbReference type="InterPro" id="IPR010236">
    <property type="entry name" value="ISC_FeS_clus_asmbl_HscA"/>
</dbReference>
<dbReference type="NCBIfam" id="TIGR01991">
    <property type="entry name" value="HscA"/>
    <property type="match status" value="1"/>
</dbReference>
<dbReference type="NCBIfam" id="NF003520">
    <property type="entry name" value="PRK05183.1"/>
    <property type="match status" value="1"/>
</dbReference>
<dbReference type="PANTHER" id="PTHR19375">
    <property type="entry name" value="HEAT SHOCK PROTEIN 70KDA"/>
    <property type="match status" value="1"/>
</dbReference>
<dbReference type="Pfam" id="PF00012">
    <property type="entry name" value="HSP70"/>
    <property type="match status" value="1"/>
</dbReference>
<dbReference type="PRINTS" id="PR00301">
    <property type="entry name" value="HEATSHOCK70"/>
</dbReference>
<dbReference type="SUPFAM" id="SSF53067">
    <property type="entry name" value="Actin-like ATPase domain"/>
    <property type="match status" value="2"/>
</dbReference>
<dbReference type="SUPFAM" id="SSF100934">
    <property type="entry name" value="Heat shock protein 70kD (HSP70), C-terminal subdomain"/>
    <property type="match status" value="1"/>
</dbReference>
<dbReference type="SUPFAM" id="SSF100920">
    <property type="entry name" value="Heat shock protein 70kD (HSP70), peptide-binding domain"/>
    <property type="match status" value="1"/>
</dbReference>
<dbReference type="PROSITE" id="PS00297">
    <property type="entry name" value="HSP70_1"/>
    <property type="match status" value="1"/>
</dbReference>
<dbReference type="PROSITE" id="PS00329">
    <property type="entry name" value="HSP70_2"/>
    <property type="match status" value="1"/>
</dbReference>
<dbReference type="PROSITE" id="PS01036">
    <property type="entry name" value="HSP70_3"/>
    <property type="match status" value="1"/>
</dbReference>
<reference key="1">
    <citation type="journal article" date="2005" name="J. Bacteriol.">
        <title>Genomic sequence of an otitis media isolate of nontypeable Haemophilus influenzae: comparative study with H. influenzae serotype d, strain KW20.</title>
        <authorList>
            <person name="Harrison A."/>
            <person name="Dyer D.W."/>
            <person name="Gillaspy A."/>
            <person name="Ray W.C."/>
            <person name="Mungur R."/>
            <person name="Carson M.B."/>
            <person name="Zhong H."/>
            <person name="Gipson J."/>
            <person name="Gipson M."/>
            <person name="Johnson L.S."/>
            <person name="Lewis L."/>
            <person name="Bakaletz L.O."/>
            <person name="Munson R.S. Jr."/>
        </authorList>
    </citation>
    <scope>NUCLEOTIDE SEQUENCE [LARGE SCALE GENOMIC DNA]</scope>
    <source>
        <strain>86-028NP</strain>
    </source>
</reference>
<gene>
    <name evidence="1" type="primary">hscA</name>
    <name type="ordered locus">NTHI0493</name>
</gene>
<accession>Q4QNG9</accession>
<name>HSCA_HAEI8</name>
<keyword id="KW-0067">ATP-binding</keyword>
<keyword id="KW-0143">Chaperone</keyword>
<keyword id="KW-0547">Nucleotide-binding</keyword>
<proteinExistence type="inferred from homology"/>
<organism>
    <name type="scientific">Haemophilus influenzae (strain 86-028NP)</name>
    <dbReference type="NCBI Taxonomy" id="281310"/>
    <lineage>
        <taxon>Bacteria</taxon>
        <taxon>Pseudomonadati</taxon>
        <taxon>Pseudomonadota</taxon>
        <taxon>Gammaproteobacteria</taxon>
        <taxon>Pasteurellales</taxon>
        <taxon>Pasteurellaceae</taxon>
        <taxon>Haemophilus</taxon>
    </lineage>
</organism>